<reference key="1">
    <citation type="journal article" date="2005" name="Genome Biol.">
        <title>Full-length cDNAs from chicken bursal lymphocytes to facilitate gene function analysis.</title>
        <authorList>
            <person name="Caldwell R.B."/>
            <person name="Kierzek A.M."/>
            <person name="Arakawa H."/>
            <person name="Bezzubov Y."/>
            <person name="Zaim J."/>
            <person name="Fiedler P."/>
            <person name="Kutter S."/>
            <person name="Blagodatski A."/>
            <person name="Kostovska D."/>
            <person name="Koter M."/>
            <person name="Plachy J."/>
            <person name="Carninci P."/>
            <person name="Hayashizaki Y."/>
            <person name="Buerstedde J.-M."/>
        </authorList>
    </citation>
    <scope>NUCLEOTIDE SEQUENCE [LARGE SCALE MRNA]</scope>
    <source>
        <strain>CB</strain>
        <tissue>Bursa of Fabricius</tissue>
    </source>
</reference>
<sequence>MSTPNVTARVETWLSSTWHVKVPLTWLEACINWIQEENGGGNLSQAQISRQVFEQWLLTDLRDLEYPILPDGILDAPKGELSGFYSLQIDSLLDVSQPAYSQLQKIRGKSTVNEEVTANTQAFQKPWEAKPTRMLMLQLTDGIHQIQGMEYQPVPVLHSNLPPGTKITVHGNVAYRLGVLLLKPENVKLLGGEVDALLEEYSQERVLARLLGEAENPDSVRQPGHEQIVPGPVDELGQTLGPSDEELLASLDENNDFILNNETSLESGYCSRSNNFSATSCSLTTYNENTTGFPLQQESVNLLPRSDEQTPPSVEYNDAFLNDFPLEDDILLEEEIQRELEEVPSVARNGNVNLSTERIPHTYRSSCGSSLNETSEKDDGCGSEKPVEVTSKQKNLARTVSTGDGTSTGGSLQCNSVSQACSSAIVLLKNPHEERRNDLGPDESSCQSRHAPDSRQLNKDPVSSSKTDPEADQQAILCRPGNACDLDLDSPPFTYISLLLAKKPETITLVKVKCFIVTLTGNLTSSNGSWGIKAKVSDGSAYLEVDFADDILTSLIGFSVPEMHTLRKDPALQPKLKDGLERCQKQLIDLCCLMTIEFNPFQSKATVLILQDTDARHLEQLKKRLNK</sequence>
<dbReference type="EMBL" id="AJ721026">
    <property type="protein sequence ID" value="CAG32685.1"/>
    <property type="molecule type" value="mRNA"/>
</dbReference>
<dbReference type="RefSeq" id="NP_001026783.1">
    <property type="nucleotide sequence ID" value="NM_001031612.2"/>
</dbReference>
<dbReference type="SMR" id="Q5ZHV8"/>
<dbReference type="BioGRID" id="688989">
    <property type="interactions" value="1"/>
</dbReference>
<dbReference type="FunCoup" id="Q5ZHV8">
    <property type="interactions" value="2085"/>
</dbReference>
<dbReference type="STRING" id="9031.ENSGALP00000020535"/>
<dbReference type="PaxDb" id="9031-ENSGALP00000020535"/>
<dbReference type="GeneID" id="431669"/>
<dbReference type="KEGG" id="gga:431669"/>
<dbReference type="CTD" id="80010"/>
<dbReference type="VEuPathDB" id="HostDB:geneid_431669"/>
<dbReference type="eggNOG" id="KOG3683">
    <property type="taxonomic scope" value="Eukaryota"/>
</dbReference>
<dbReference type="InParanoid" id="Q5ZHV8"/>
<dbReference type="OrthoDB" id="341511at2759"/>
<dbReference type="PhylomeDB" id="Q5ZHV8"/>
<dbReference type="PRO" id="PR:Q5ZHV8"/>
<dbReference type="Proteomes" id="UP000000539">
    <property type="component" value="Unassembled WGS sequence"/>
</dbReference>
<dbReference type="GO" id="GO:0016604">
    <property type="term" value="C:nuclear body"/>
    <property type="evidence" value="ECO:0000318"/>
    <property type="project" value="GO_Central"/>
</dbReference>
<dbReference type="GO" id="GO:0031422">
    <property type="term" value="C:RecQ family helicase-topoisomerase III complex"/>
    <property type="evidence" value="ECO:0000318"/>
    <property type="project" value="GO_Central"/>
</dbReference>
<dbReference type="GO" id="GO:0000166">
    <property type="term" value="F:nucleotide binding"/>
    <property type="evidence" value="ECO:0007669"/>
    <property type="project" value="InterPro"/>
</dbReference>
<dbReference type="GO" id="GO:0006260">
    <property type="term" value="P:DNA replication"/>
    <property type="evidence" value="ECO:0007669"/>
    <property type="project" value="UniProtKB-KW"/>
</dbReference>
<dbReference type="GO" id="GO:0000724">
    <property type="term" value="P:double-strand break repair via homologous recombination"/>
    <property type="evidence" value="ECO:0000318"/>
    <property type="project" value="GO_Central"/>
</dbReference>
<dbReference type="GO" id="GO:0000712">
    <property type="term" value="P:resolution of meiotic recombination intermediates"/>
    <property type="evidence" value="ECO:0000318"/>
    <property type="project" value="GO_Central"/>
</dbReference>
<dbReference type="FunFam" id="1.10.8.1020:FF:000001">
    <property type="entry name" value="RecQ-mediated genome instability protein 1"/>
    <property type="match status" value="1"/>
</dbReference>
<dbReference type="FunFam" id="2.40.50.770:FF:000002">
    <property type="entry name" value="recQ-mediated genome instability protein 1"/>
    <property type="match status" value="1"/>
</dbReference>
<dbReference type="Gene3D" id="2.40.50.510">
    <property type="match status" value="2"/>
</dbReference>
<dbReference type="Gene3D" id="1.10.8.1020">
    <property type="entry name" value="RecQ-mediated genome instability protein 1, N-terminal domain"/>
    <property type="match status" value="1"/>
</dbReference>
<dbReference type="Gene3D" id="2.40.50.770">
    <property type="entry name" value="RecQ-mediated genome instability protein Rmi1, C-terminal domain"/>
    <property type="match status" value="1"/>
</dbReference>
<dbReference type="InterPro" id="IPR032199">
    <property type="entry name" value="RMI1_C"/>
</dbReference>
<dbReference type="InterPro" id="IPR049363">
    <property type="entry name" value="RMI1_N"/>
</dbReference>
<dbReference type="InterPro" id="IPR042470">
    <property type="entry name" value="RMI1_N_C_sf"/>
</dbReference>
<dbReference type="InterPro" id="IPR044881">
    <property type="entry name" value="RMI1_N_N_sf"/>
</dbReference>
<dbReference type="InterPro" id="IPR013894">
    <property type="entry name" value="RMI1_OB"/>
</dbReference>
<dbReference type="PANTHER" id="PTHR14790:SF15">
    <property type="entry name" value="RECQ-MEDIATED GENOME INSTABILITY PROTEIN 1"/>
    <property type="match status" value="1"/>
</dbReference>
<dbReference type="PANTHER" id="PTHR14790">
    <property type="entry name" value="RECQ-MEDIATED GENOME INSTABILITY PROTEIN 1 RMI1"/>
    <property type="match status" value="1"/>
</dbReference>
<dbReference type="Pfam" id="PF16099">
    <property type="entry name" value="RMI1_C"/>
    <property type="match status" value="1"/>
</dbReference>
<dbReference type="Pfam" id="PF08585">
    <property type="entry name" value="RMI1_N_C"/>
    <property type="match status" value="1"/>
</dbReference>
<dbReference type="Pfam" id="PF21000">
    <property type="entry name" value="RMI1_N_N"/>
    <property type="match status" value="1"/>
</dbReference>
<dbReference type="SMART" id="SM01161">
    <property type="entry name" value="DUF1767"/>
    <property type="match status" value="1"/>
</dbReference>
<evidence type="ECO:0000250" key="1"/>
<evidence type="ECO:0000256" key="2">
    <source>
        <dbReference type="SAM" id="MobiDB-lite"/>
    </source>
</evidence>
<evidence type="ECO:0000305" key="3"/>
<organism>
    <name type="scientific">Gallus gallus</name>
    <name type="common">Chicken</name>
    <dbReference type="NCBI Taxonomy" id="9031"/>
    <lineage>
        <taxon>Eukaryota</taxon>
        <taxon>Metazoa</taxon>
        <taxon>Chordata</taxon>
        <taxon>Craniata</taxon>
        <taxon>Vertebrata</taxon>
        <taxon>Euteleostomi</taxon>
        <taxon>Archelosauria</taxon>
        <taxon>Archosauria</taxon>
        <taxon>Dinosauria</taxon>
        <taxon>Saurischia</taxon>
        <taxon>Theropoda</taxon>
        <taxon>Coelurosauria</taxon>
        <taxon>Aves</taxon>
        <taxon>Neognathae</taxon>
        <taxon>Galloanserae</taxon>
        <taxon>Galliformes</taxon>
        <taxon>Phasianidae</taxon>
        <taxon>Phasianinae</taxon>
        <taxon>Gallus</taxon>
    </lineage>
</organism>
<name>RMI1_CHICK</name>
<protein>
    <recommendedName>
        <fullName>RecQ-mediated genome instability protein 1</fullName>
    </recommendedName>
</protein>
<comment type="function">
    <text evidence="1">Essential component of the RMI complex, a complex that plays an important role in the processing of homologous recombination intermediates to limit DNA crossover formation in cells. Promotes TOP3A binding to double Holliday junctions (DHJ) and hence stimulates TOP3A-mediated dissolution. Required for BLM phosphorylation during mitosis. Within the BLM complex, required for BLM and TOP3A stability (By similarity).</text>
</comment>
<comment type="subunit">
    <text evidence="1">Component of the RMI complex, containing at least TOP3A, RMI1 and RMI2.</text>
</comment>
<comment type="subcellular location">
    <subcellularLocation>
        <location evidence="1">Nucleus</location>
    </subcellularLocation>
</comment>
<comment type="similarity">
    <text evidence="3">Belongs to the RMI1 family.</text>
</comment>
<feature type="chain" id="PRO_0000361550" description="RecQ-mediated genome instability protein 1">
    <location>
        <begin position="1"/>
        <end position="627"/>
    </location>
</feature>
<feature type="region of interest" description="Disordered" evidence="2">
    <location>
        <begin position="362"/>
        <end position="412"/>
    </location>
</feature>
<feature type="region of interest" description="Disordered" evidence="2">
    <location>
        <begin position="432"/>
        <end position="472"/>
    </location>
</feature>
<feature type="compositionally biased region" description="Polar residues" evidence="2">
    <location>
        <begin position="363"/>
        <end position="373"/>
    </location>
</feature>
<feature type="compositionally biased region" description="Basic and acidic residues" evidence="2">
    <location>
        <begin position="374"/>
        <end position="387"/>
    </location>
</feature>
<feature type="compositionally biased region" description="Low complexity" evidence="2">
    <location>
        <begin position="399"/>
        <end position="411"/>
    </location>
</feature>
<proteinExistence type="evidence at transcript level"/>
<accession>Q5ZHV8</accession>
<keyword id="KW-0235">DNA replication</keyword>
<keyword id="KW-0539">Nucleus</keyword>
<keyword id="KW-1185">Reference proteome</keyword>
<gene>
    <name type="primary">RMI1</name>
    <name type="ORF">RCJMB04_32l8</name>
</gene>